<proteinExistence type="inferred from homology"/>
<keyword id="KW-0119">Carbohydrate metabolism</keyword>
<keyword id="KW-0963">Cytoplasm</keyword>
<keyword id="KW-0413">Isomerase</keyword>
<keyword id="KW-0684">Rhamnose metabolism</keyword>
<feature type="chain" id="PRO_1000187225" description="L-rhamnose mutarotase">
    <location>
        <begin position="1"/>
        <end position="104"/>
    </location>
</feature>
<feature type="active site" description="Proton donor" evidence="1">
    <location>
        <position position="22"/>
    </location>
</feature>
<feature type="binding site" evidence="1">
    <location>
        <position position="18"/>
    </location>
    <ligand>
        <name>substrate</name>
    </ligand>
</feature>
<feature type="binding site" evidence="1">
    <location>
        <position position="41"/>
    </location>
    <ligand>
        <name>substrate</name>
    </ligand>
</feature>
<feature type="binding site" evidence="1">
    <location>
        <begin position="76"/>
        <end position="77"/>
    </location>
    <ligand>
        <name>substrate</name>
    </ligand>
</feature>
<comment type="function">
    <text evidence="1">Involved in the anomeric conversion of L-rhamnose.</text>
</comment>
<comment type="catalytic activity">
    <reaction evidence="1">
        <text>alpha-L-rhamnose = beta-L-rhamnose</text>
        <dbReference type="Rhea" id="RHEA:25584"/>
        <dbReference type="ChEBI" id="CHEBI:27586"/>
        <dbReference type="ChEBI" id="CHEBI:27907"/>
        <dbReference type="EC" id="5.1.3.32"/>
    </reaction>
</comment>
<comment type="pathway">
    <text evidence="1">Carbohydrate metabolism; L-rhamnose metabolism.</text>
</comment>
<comment type="subunit">
    <text evidence="1">Homodimer.</text>
</comment>
<comment type="subcellular location">
    <subcellularLocation>
        <location evidence="1">Cytoplasm</location>
    </subcellularLocation>
</comment>
<comment type="similarity">
    <text evidence="1">Belongs to the rhamnose mutarotase family.</text>
</comment>
<evidence type="ECO:0000255" key="1">
    <source>
        <dbReference type="HAMAP-Rule" id="MF_01663"/>
    </source>
</evidence>
<protein>
    <recommendedName>
        <fullName evidence="1">L-rhamnose mutarotase</fullName>
        <ecNumber evidence="1">5.1.3.32</ecNumber>
    </recommendedName>
    <alternativeName>
        <fullName evidence="1">Rhamnose 1-epimerase</fullName>
    </alternativeName>
    <alternativeName>
        <fullName evidence="1">Type-3 mutarotase</fullName>
    </alternativeName>
</protein>
<reference key="1">
    <citation type="journal article" date="2011" name="J. Bacteriol.">
        <title>Comparative genomics of 28 Salmonella enterica isolates: evidence for CRISPR-mediated adaptive sublineage evolution.</title>
        <authorList>
            <person name="Fricke W.F."/>
            <person name="Mammel M.K."/>
            <person name="McDermott P.F."/>
            <person name="Tartera C."/>
            <person name="White D.G."/>
            <person name="Leclerc J.E."/>
            <person name="Ravel J."/>
            <person name="Cebula T.A."/>
        </authorList>
    </citation>
    <scope>NUCLEOTIDE SEQUENCE [LARGE SCALE GENOMIC DNA]</scope>
    <source>
        <strain>SL483</strain>
    </source>
</reference>
<sequence length="104" mass="12334">MIRKAFVMQVNADAHEEYQRRHNPIWPELEAVLKSHGAHHYAIYLDQERNLLFATVEIESEERWNAVASTDVCQRWWKHMRDVMPANPDNSPVSAELKEVFYLQ</sequence>
<accession>B5F0M4</accession>
<gene>
    <name evidence="1" type="primary">rhaM</name>
    <name type="ordered locus">SeAg_B4286</name>
</gene>
<organism>
    <name type="scientific">Salmonella agona (strain SL483)</name>
    <dbReference type="NCBI Taxonomy" id="454166"/>
    <lineage>
        <taxon>Bacteria</taxon>
        <taxon>Pseudomonadati</taxon>
        <taxon>Pseudomonadota</taxon>
        <taxon>Gammaproteobacteria</taxon>
        <taxon>Enterobacterales</taxon>
        <taxon>Enterobacteriaceae</taxon>
        <taxon>Salmonella</taxon>
    </lineage>
</organism>
<name>RHAM_SALA4</name>
<dbReference type="EC" id="5.1.3.32" evidence="1"/>
<dbReference type="EMBL" id="CP001138">
    <property type="protein sequence ID" value="ACH52215.1"/>
    <property type="molecule type" value="Genomic_DNA"/>
</dbReference>
<dbReference type="RefSeq" id="WP_000619478.1">
    <property type="nucleotide sequence ID" value="NC_011149.1"/>
</dbReference>
<dbReference type="SMR" id="B5F0M4"/>
<dbReference type="KEGG" id="sea:SeAg_B4286"/>
<dbReference type="HOGENOM" id="CLU_100689_2_0_6"/>
<dbReference type="UniPathway" id="UPA00125"/>
<dbReference type="Proteomes" id="UP000008819">
    <property type="component" value="Chromosome"/>
</dbReference>
<dbReference type="GO" id="GO:0005737">
    <property type="term" value="C:cytoplasm"/>
    <property type="evidence" value="ECO:0007669"/>
    <property type="project" value="UniProtKB-SubCell"/>
</dbReference>
<dbReference type="GO" id="GO:0062192">
    <property type="term" value="F:L-rhamnose mutarotase activity"/>
    <property type="evidence" value="ECO:0007669"/>
    <property type="project" value="UniProtKB-EC"/>
</dbReference>
<dbReference type="GO" id="GO:0019301">
    <property type="term" value="P:rhamnose catabolic process"/>
    <property type="evidence" value="ECO:0007669"/>
    <property type="project" value="TreeGrafter"/>
</dbReference>
<dbReference type="Gene3D" id="3.30.70.100">
    <property type="match status" value="1"/>
</dbReference>
<dbReference type="HAMAP" id="MF_01663">
    <property type="entry name" value="L_rham_rotase"/>
    <property type="match status" value="1"/>
</dbReference>
<dbReference type="InterPro" id="IPR011008">
    <property type="entry name" value="Dimeric_a/b-barrel"/>
</dbReference>
<dbReference type="InterPro" id="IPR013448">
    <property type="entry name" value="L-rhamnose_mutarotase"/>
</dbReference>
<dbReference type="InterPro" id="IPR008000">
    <property type="entry name" value="Rham/fucose_mutarotase"/>
</dbReference>
<dbReference type="NCBIfam" id="TIGR02625">
    <property type="entry name" value="YiiL_rotase"/>
    <property type="match status" value="1"/>
</dbReference>
<dbReference type="PANTHER" id="PTHR34389">
    <property type="entry name" value="L-RHAMNOSE MUTAROTASE"/>
    <property type="match status" value="1"/>
</dbReference>
<dbReference type="PANTHER" id="PTHR34389:SF2">
    <property type="entry name" value="L-RHAMNOSE MUTAROTASE"/>
    <property type="match status" value="1"/>
</dbReference>
<dbReference type="Pfam" id="PF05336">
    <property type="entry name" value="rhaM"/>
    <property type="match status" value="1"/>
</dbReference>
<dbReference type="SUPFAM" id="SSF54909">
    <property type="entry name" value="Dimeric alpha+beta barrel"/>
    <property type="match status" value="1"/>
</dbReference>